<accession>B7GPW0</accession>
<accession>E8MQR5</accession>
<keyword id="KW-0694">RNA-binding</keyword>
<keyword id="KW-0804">Transcription</keyword>
<keyword id="KW-0889">Transcription antitermination</keyword>
<keyword id="KW-0805">Transcription regulation</keyword>
<evidence type="ECO:0000255" key="1">
    <source>
        <dbReference type="HAMAP-Rule" id="MF_00073"/>
    </source>
</evidence>
<evidence type="ECO:0000256" key="2">
    <source>
        <dbReference type="SAM" id="MobiDB-lite"/>
    </source>
</evidence>
<proteinExistence type="inferred from homology"/>
<protein>
    <recommendedName>
        <fullName evidence="1">Transcription antitermination protein NusB</fullName>
    </recommendedName>
    <alternativeName>
        <fullName evidence="1">Antitermination factor NusB</fullName>
    </alternativeName>
</protein>
<sequence length="187" mass="20079">MARSTARKRALNTLYEADEKNQDILSLLDERIAHPGAQTPLPDYAIEIVKGVAEHRRQIDMTLDEHSTGWKVRRMGVVDRNILRIAAWEILFNDDVPDKVAIDEALALAKTLCDDDSPAFIHGLLSAVCTAKNAAPAPESVAEEADEESSDSDAAASDPTDEGDVSDSSGASDEPAAPSAEIQPTVD</sequence>
<reference key="1">
    <citation type="journal article" date="2008" name="Proc. Natl. Acad. Sci. U.S.A.">
        <title>The genome sequence of Bifidobacterium longum subsp. infantis reveals adaptations for milk utilization within the infant microbiome.</title>
        <authorList>
            <person name="Sela D.A."/>
            <person name="Chapman J."/>
            <person name="Adeuya A."/>
            <person name="Kim J.H."/>
            <person name="Chen F."/>
            <person name="Whitehead T.R."/>
            <person name="Lapidus A."/>
            <person name="Rokhsar D.S."/>
            <person name="Lebrilla C.B."/>
            <person name="German J.B."/>
            <person name="Price N.P."/>
            <person name="Richardson P.M."/>
            <person name="Mills D.A."/>
        </authorList>
    </citation>
    <scope>NUCLEOTIDE SEQUENCE [LARGE SCALE GENOMIC DNA]</scope>
    <source>
        <strain>ATCC 15697 / DSM 20088 / JCM 1222 / NCTC 11817 / S12</strain>
    </source>
</reference>
<reference key="2">
    <citation type="journal article" date="2011" name="Nature">
        <title>Bifidobacteria can protect from enteropathogenic infection through production of acetate.</title>
        <authorList>
            <person name="Fukuda S."/>
            <person name="Toh H."/>
            <person name="Hase K."/>
            <person name="Oshima K."/>
            <person name="Nakanishi Y."/>
            <person name="Yoshimura K."/>
            <person name="Tobe T."/>
            <person name="Clarke J.M."/>
            <person name="Topping D.L."/>
            <person name="Suzuki T."/>
            <person name="Taylor T.D."/>
            <person name="Itoh K."/>
            <person name="Kikuchi J."/>
            <person name="Morita H."/>
            <person name="Hattori M."/>
            <person name="Ohno H."/>
        </authorList>
    </citation>
    <scope>NUCLEOTIDE SEQUENCE [LARGE SCALE GENOMIC DNA]</scope>
    <source>
        <strain>ATCC 15697 / DSM 20088 / JCM 1222 / NCTC 11817 / S12</strain>
    </source>
</reference>
<dbReference type="EMBL" id="CP001095">
    <property type="protein sequence ID" value="ACJ51840.1"/>
    <property type="molecule type" value="Genomic_DNA"/>
</dbReference>
<dbReference type="EMBL" id="AP010889">
    <property type="protein sequence ID" value="BAJ68340.1"/>
    <property type="molecule type" value="Genomic_DNA"/>
</dbReference>
<dbReference type="RefSeq" id="WP_012577125.1">
    <property type="nucleotide sequence ID" value="NC_011593.1"/>
</dbReference>
<dbReference type="SMR" id="B7GPW0"/>
<dbReference type="KEGG" id="bln:Blon_0736"/>
<dbReference type="KEGG" id="blon:BLIJ_0748"/>
<dbReference type="PATRIC" id="fig|391904.8.peg.752"/>
<dbReference type="HOGENOM" id="CLU_087843_2_1_11"/>
<dbReference type="Proteomes" id="UP000001360">
    <property type="component" value="Chromosome"/>
</dbReference>
<dbReference type="GO" id="GO:0005829">
    <property type="term" value="C:cytosol"/>
    <property type="evidence" value="ECO:0007669"/>
    <property type="project" value="TreeGrafter"/>
</dbReference>
<dbReference type="GO" id="GO:0003723">
    <property type="term" value="F:RNA binding"/>
    <property type="evidence" value="ECO:0007669"/>
    <property type="project" value="UniProtKB-UniRule"/>
</dbReference>
<dbReference type="GO" id="GO:0006353">
    <property type="term" value="P:DNA-templated transcription termination"/>
    <property type="evidence" value="ECO:0007669"/>
    <property type="project" value="UniProtKB-UniRule"/>
</dbReference>
<dbReference type="GO" id="GO:0031564">
    <property type="term" value="P:transcription antitermination"/>
    <property type="evidence" value="ECO:0007669"/>
    <property type="project" value="UniProtKB-KW"/>
</dbReference>
<dbReference type="Gene3D" id="1.10.940.10">
    <property type="entry name" value="NusB-like"/>
    <property type="match status" value="1"/>
</dbReference>
<dbReference type="HAMAP" id="MF_00073">
    <property type="entry name" value="NusB"/>
    <property type="match status" value="1"/>
</dbReference>
<dbReference type="InterPro" id="IPR035926">
    <property type="entry name" value="NusB-like_sf"/>
</dbReference>
<dbReference type="InterPro" id="IPR011605">
    <property type="entry name" value="NusB_fam"/>
</dbReference>
<dbReference type="InterPro" id="IPR006027">
    <property type="entry name" value="NusB_RsmB_TIM44"/>
</dbReference>
<dbReference type="NCBIfam" id="TIGR01951">
    <property type="entry name" value="nusB"/>
    <property type="match status" value="1"/>
</dbReference>
<dbReference type="PANTHER" id="PTHR11078:SF3">
    <property type="entry name" value="ANTITERMINATION NUSB DOMAIN-CONTAINING PROTEIN"/>
    <property type="match status" value="1"/>
</dbReference>
<dbReference type="PANTHER" id="PTHR11078">
    <property type="entry name" value="N UTILIZATION SUBSTANCE PROTEIN B-RELATED"/>
    <property type="match status" value="1"/>
</dbReference>
<dbReference type="Pfam" id="PF01029">
    <property type="entry name" value="NusB"/>
    <property type="match status" value="1"/>
</dbReference>
<dbReference type="SUPFAM" id="SSF48013">
    <property type="entry name" value="NusB-like"/>
    <property type="match status" value="1"/>
</dbReference>
<name>NUSB_BIFLS</name>
<gene>
    <name evidence="1" type="primary">nusB</name>
    <name type="ordered locus">Blon_0736</name>
    <name type="ordered locus">BLIJ_0748</name>
</gene>
<organism>
    <name type="scientific">Bifidobacterium longum subsp. infantis (strain ATCC 15697 / DSM 20088 / JCM 1222 / NCTC 11817 / S12)</name>
    <dbReference type="NCBI Taxonomy" id="391904"/>
    <lineage>
        <taxon>Bacteria</taxon>
        <taxon>Bacillati</taxon>
        <taxon>Actinomycetota</taxon>
        <taxon>Actinomycetes</taxon>
        <taxon>Bifidobacteriales</taxon>
        <taxon>Bifidobacteriaceae</taxon>
        <taxon>Bifidobacterium</taxon>
    </lineage>
</organism>
<comment type="function">
    <text evidence="1">Involved in transcription antitermination. Required for transcription of ribosomal RNA (rRNA) genes. Binds specifically to the boxA antiterminator sequence of the ribosomal RNA (rrn) operons.</text>
</comment>
<comment type="similarity">
    <text evidence="1">Belongs to the NusB family.</text>
</comment>
<feature type="chain" id="PRO_1000192417" description="Transcription antitermination protein NusB">
    <location>
        <begin position="1"/>
        <end position="187"/>
    </location>
</feature>
<feature type="region of interest" description="Disordered" evidence="2">
    <location>
        <begin position="135"/>
        <end position="187"/>
    </location>
</feature>
<feature type="compositionally biased region" description="Acidic residues" evidence="2">
    <location>
        <begin position="141"/>
        <end position="151"/>
    </location>
</feature>